<protein>
    <recommendedName>
        <fullName>Zinc finger protein 536</fullName>
    </recommendedName>
</protein>
<reference key="1">
    <citation type="journal article" date="1997" name="DNA Res.">
        <title>Prediction of the coding sequences of unidentified human genes. VII. The complete sequences of 100 new cDNA clones from brain which can code for large proteins in vitro.</title>
        <authorList>
            <person name="Nagase T."/>
            <person name="Ishikawa K."/>
            <person name="Nakajima D."/>
            <person name="Ohira M."/>
            <person name="Seki N."/>
            <person name="Miyajima N."/>
            <person name="Tanaka A."/>
            <person name="Kotani H."/>
            <person name="Nomura N."/>
            <person name="Ohara O."/>
        </authorList>
    </citation>
    <scope>NUCLEOTIDE SEQUENCE [LARGE SCALE MRNA]</scope>
    <source>
        <tissue>Brain</tissue>
    </source>
</reference>
<reference key="2">
    <citation type="submission" date="2005-04" db="EMBL/GenBank/DDBJ databases">
        <authorList>
            <person name="Ohara O."/>
            <person name="Nagase T."/>
            <person name="Kikuno R."/>
            <person name="Nomura N."/>
        </authorList>
    </citation>
    <scope>SEQUENCE REVISION</scope>
</reference>
<reference key="3">
    <citation type="journal article" date="2004" name="Genome Res.">
        <title>The status, quality, and expansion of the NIH full-length cDNA project: the Mammalian Gene Collection (MGC).</title>
        <authorList>
            <consortium name="The MGC Project Team"/>
        </authorList>
    </citation>
    <scope>NUCLEOTIDE SEQUENCE [LARGE SCALE MRNA]</scope>
</reference>
<reference key="4">
    <citation type="journal article" date="2009" name="Mol. Cell. Biol.">
        <title>ZNF536, a novel zinc finger protein specifically expressed in the brain, negatively regulates neuron differentiation by repressing retinoic acid-induced gene transcription.</title>
        <authorList>
            <person name="Qin Z."/>
            <person name="Ren F."/>
            <person name="Xu X."/>
            <person name="Ren Y."/>
            <person name="Li H."/>
            <person name="Wang Y."/>
            <person name="Zhai Y."/>
            <person name="Chang Z."/>
        </authorList>
    </citation>
    <scope>FUNCTION</scope>
    <scope>DNA-BINDING</scope>
    <scope>SUBCELLULAR LOCATION</scope>
</reference>
<reference key="5">
    <citation type="journal article" date="2003" name="DNA Res.">
        <title>Identification of the DNA binding specificity of the human ZNF219 protein and its function as a transcriptional repressor.</title>
        <authorList>
            <person name="Sakai T."/>
            <person name="Hino K."/>
            <person name="Wada S."/>
            <person name="Maeda H."/>
        </authorList>
    </citation>
    <scope>DNA-BINDING</scope>
    <scope>FUNCTION</scope>
</reference>
<reference key="6">
    <citation type="journal article" date="2009" name="Sci. Signal.">
        <title>Quantitative phosphoproteomic analysis of T cell receptor signaling reveals system-wide modulation of protein-protein interactions.</title>
        <authorList>
            <person name="Mayya V."/>
            <person name="Lundgren D.H."/>
            <person name="Hwang S.-I."/>
            <person name="Rezaul K."/>
            <person name="Wu L."/>
            <person name="Eng J.K."/>
            <person name="Rodionov V."/>
            <person name="Han D.K."/>
        </authorList>
    </citation>
    <scope>PHOSPHORYLATION [LARGE SCALE ANALYSIS] AT SER-826 AND SER-827</scope>
    <scope>IDENTIFICATION BY MASS SPECTROMETRY [LARGE SCALE ANALYSIS]</scope>
    <source>
        <tissue>Leukemic T-cell</tissue>
    </source>
</reference>
<evidence type="ECO:0000255" key="1">
    <source>
        <dbReference type="PROSITE-ProRule" id="PRU00042"/>
    </source>
</evidence>
<evidence type="ECO:0000256" key="2">
    <source>
        <dbReference type="SAM" id="MobiDB-lite"/>
    </source>
</evidence>
<evidence type="ECO:0000269" key="3">
    <source>
    </source>
</evidence>
<evidence type="ECO:0000269" key="4">
    <source>
    </source>
</evidence>
<evidence type="ECO:0000305" key="5"/>
<evidence type="ECO:0007744" key="6">
    <source>
    </source>
</evidence>
<name>ZN536_HUMAN</name>
<gene>
    <name type="primary">ZNF536</name>
    <name type="synonym">KIAA0390</name>
</gene>
<dbReference type="EMBL" id="AB002388">
    <property type="protein sequence ID" value="BAA20844.2"/>
    <property type="status" value="ALT_INIT"/>
    <property type="molecule type" value="mRNA"/>
</dbReference>
<dbReference type="EMBL" id="BC132720">
    <property type="protein sequence ID" value="AAI32721.1"/>
    <property type="molecule type" value="mRNA"/>
</dbReference>
<dbReference type="EMBL" id="BC132722">
    <property type="protein sequence ID" value="AAI32723.1"/>
    <property type="molecule type" value="mRNA"/>
</dbReference>
<dbReference type="EMBL" id="BC146757">
    <property type="protein sequence ID" value="AAI46758.1"/>
    <property type="molecule type" value="mRNA"/>
</dbReference>
<dbReference type="CCDS" id="CCDS32984.1"/>
<dbReference type="RefSeq" id="NP_055532.1">
    <property type="nucleotide sequence ID" value="NM_014717.3"/>
</dbReference>
<dbReference type="RefSeq" id="XP_016883031.1">
    <property type="nucleotide sequence ID" value="XM_017027542.2"/>
</dbReference>
<dbReference type="RefSeq" id="XP_047295731.1">
    <property type="nucleotide sequence ID" value="XM_047439775.1"/>
</dbReference>
<dbReference type="RefSeq" id="XP_047295732.1">
    <property type="nucleotide sequence ID" value="XM_047439776.1"/>
</dbReference>
<dbReference type="RefSeq" id="XP_047295733.1">
    <property type="nucleotide sequence ID" value="XM_047439777.1"/>
</dbReference>
<dbReference type="RefSeq" id="XP_047295734.1">
    <property type="nucleotide sequence ID" value="XM_047439778.1"/>
</dbReference>
<dbReference type="RefSeq" id="XP_047295735.1">
    <property type="nucleotide sequence ID" value="XM_047439779.1"/>
</dbReference>
<dbReference type="RefSeq" id="XP_047295736.1">
    <property type="nucleotide sequence ID" value="XM_047439780.1"/>
</dbReference>
<dbReference type="RefSeq" id="XP_047295737.1">
    <property type="nucleotide sequence ID" value="XM_047439781.1"/>
</dbReference>
<dbReference type="RefSeq" id="XP_047295738.1">
    <property type="nucleotide sequence ID" value="XM_047439782.1"/>
</dbReference>
<dbReference type="RefSeq" id="XP_047295739.1">
    <property type="nucleotide sequence ID" value="XM_047439783.1"/>
</dbReference>
<dbReference type="RefSeq" id="XP_047295740.1">
    <property type="nucleotide sequence ID" value="XM_047439784.1"/>
</dbReference>
<dbReference type="RefSeq" id="XP_047295741.1">
    <property type="nucleotide sequence ID" value="XM_047439785.1"/>
</dbReference>
<dbReference type="RefSeq" id="XP_047295742.1">
    <property type="nucleotide sequence ID" value="XM_047439786.1"/>
</dbReference>
<dbReference type="RefSeq" id="XP_054178756.1">
    <property type="nucleotide sequence ID" value="XM_054322781.1"/>
</dbReference>
<dbReference type="RefSeq" id="XP_054178757.1">
    <property type="nucleotide sequence ID" value="XM_054322782.1"/>
</dbReference>
<dbReference type="RefSeq" id="XP_054178758.1">
    <property type="nucleotide sequence ID" value="XM_054322783.1"/>
</dbReference>
<dbReference type="RefSeq" id="XP_054178759.1">
    <property type="nucleotide sequence ID" value="XM_054322784.1"/>
</dbReference>
<dbReference type="RefSeq" id="XP_054178760.1">
    <property type="nucleotide sequence ID" value="XM_054322785.1"/>
</dbReference>
<dbReference type="RefSeq" id="XP_054178761.1">
    <property type="nucleotide sequence ID" value="XM_054322786.1"/>
</dbReference>
<dbReference type="RefSeq" id="XP_054178762.1">
    <property type="nucleotide sequence ID" value="XM_054322787.1"/>
</dbReference>
<dbReference type="RefSeq" id="XP_054178763.1">
    <property type="nucleotide sequence ID" value="XM_054322788.1"/>
</dbReference>
<dbReference type="RefSeq" id="XP_054178764.1">
    <property type="nucleotide sequence ID" value="XM_054322789.1"/>
</dbReference>
<dbReference type="RefSeq" id="XP_054178765.1">
    <property type="nucleotide sequence ID" value="XM_054322790.1"/>
</dbReference>
<dbReference type="RefSeq" id="XP_054178766.1">
    <property type="nucleotide sequence ID" value="XM_054322791.1"/>
</dbReference>
<dbReference type="RefSeq" id="XP_054178767.1">
    <property type="nucleotide sequence ID" value="XM_054322792.1"/>
</dbReference>
<dbReference type="RefSeq" id="XP_054178768.1">
    <property type="nucleotide sequence ID" value="XM_054322793.1"/>
</dbReference>
<dbReference type="SMR" id="O15090"/>
<dbReference type="BioGRID" id="115093">
    <property type="interactions" value="63"/>
</dbReference>
<dbReference type="FunCoup" id="O15090">
    <property type="interactions" value="1440"/>
</dbReference>
<dbReference type="IntAct" id="O15090">
    <property type="interactions" value="35"/>
</dbReference>
<dbReference type="MINT" id="O15090"/>
<dbReference type="STRING" id="9606.ENSP00000347730"/>
<dbReference type="GlyGen" id="O15090">
    <property type="glycosylation" value="1 site, 1 O-linked glycan (1 site)"/>
</dbReference>
<dbReference type="iPTMnet" id="O15090"/>
<dbReference type="PhosphoSitePlus" id="O15090"/>
<dbReference type="BioMuta" id="ZNF536"/>
<dbReference type="jPOST" id="O15090"/>
<dbReference type="MassIVE" id="O15090"/>
<dbReference type="PaxDb" id="9606-ENSP00000347730"/>
<dbReference type="PeptideAtlas" id="O15090"/>
<dbReference type="ProteomicsDB" id="48443"/>
<dbReference type="Pumba" id="O15090"/>
<dbReference type="Antibodypedia" id="15575">
    <property type="antibodies" value="84 antibodies from 20 providers"/>
</dbReference>
<dbReference type="DNASU" id="9745"/>
<dbReference type="Ensembl" id="ENST00000355537.4">
    <property type="protein sequence ID" value="ENSP00000347730.1"/>
    <property type="gene ID" value="ENSG00000198597.10"/>
</dbReference>
<dbReference type="Ensembl" id="ENST00000706142.1">
    <property type="protein sequence ID" value="ENSP00000516226.1"/>
    <property type="gene ID" value="ENSG00000198597.10"/>
</dbReference>
<dbReference type="Ensembl" id="ENST00000706144.1">
    <property type="protein sequence ID" value="ENSP00000516228.1"/>
    <property type="gene ID" value="ENSG00000198597.10"/>
</dbReference>
<dbReference type="Ensembl" id="ENST00000706146.1">
    <property type="protein sequence ID" value="ENSP00000516229.1"/>
    <property type="gene ID" value="ENSG00000198597.10"/>
</dbReference>
<dbReference type="GeneID" id="9745"/>
<dbReference type="KEGG" id="hsa:9745"/>
<dbReference type="MANE-Select" id="ENST00000355537.4">
    <property type="protein sequence ID" value="ENSP00000347730.1"/>
    <property type="RefSeq nucleotide sequence ID" value="NM_014717.3"/>
    <property type="RefSeq protein sequence ID" value="NP_055532.1"/>
</dbReference>
<dbReference type="UCSC" id="uc002nsu.2">
    <property type="organism name" value="human"/>
</dbReference>
<dbReference type="AGR" id="HGNC:29025"/>
<dbReference type="CTD" id="9745"/>
<dbReference type="DisGeNET" id="9745"/>
<dbReference type="GeneCards" id="ZNF536"/>
<dbReference type="HGNC" id="HGNC:29025">
    <property type="gene designation" value="ZNF536"/>
</dbReference>
<dbReference type="HPA" id="ENSG00000198597">
    <property type="expression patterns" value="Tissue enhanced (brain, retina)"/>
</dbReference>
<dbReference type="MIM" id="618037">
    <property type="type" value="gene"/>
</dbReference>
<dbReference type="neXtProt" id="NX_O15090"/>
<dbReference type="OpenTargets" id="ENSG00000198597"/>
<dbReference type="PharmGKB" id="PA134920047"/>
<dbReference type="VEuPathDB" id="HostDB:ENSG00000198597"/>
<dbReference type="eggNOG" id="KOG1721">
    <property type="taxonomic scope" value="Eukaryota"/>
</dbReference>
<dbReference type="GeneTree" id="ENSGT00940000156397"/>
<dbReference type="InParanoid" id="O15090"/>
<dbReference type="OMA" id="EKMTQGH"/>
<dbReference type="OrthoDB" id="6077919at2759"/>
<dbReference type="PAN-GO" id="O15090">
    <property type="GO annotations" value="4 GO annotations based on evolutionary models"/>
</dbReference>
<dbReference type="PhylomeDB" id="O15090"/>
<dbReference type="TreeFam" id="TF332241"/>
<dbReference type="PathwayCommons" id="O15090"/>
<dbReference type="SignaLink" id="O15090"/>
<dbReference type="BioGRID-ORCS" id="9745">
    <property type="hits" value="15 hits in 1170 CRISPR screens"/>
</dbReference>
<dbReference type="ChiTaRS" id="ZNF536">
    <property type="organism name" value="human"/>
</dbReference>
<dbReference type="GenomeRNAi" id="9745"/>
<dbReference type="Pharos" id="O15090">
    <property type="development level" value="Tbio"/>
</dbReference>
<dbReference type="PRO" id="PR:O15090"/>
<dbReference type="Proteomes" id="UP000005640">
    <property type="component" value="Chromosome 19"/>
</dbReference>
<dbReference type="RNAct" id="O15090">
    <property type="molecule type" value="protein"/>
</dbReference>
<dbReference type="Bgee" id="ENSG00000198597">
    <property type="expression patterns" value="Expressed in buccal mucosa cell and 140 other cell types or tissues"/>
</dbReference>
<dbReference type="ExpressionAtlas" id="O15090">
    <property type="expression patterns" value="baseline and differential"/>
</dbReference>
<dbReference type="GO" id="GO:0005634">
    <property type="term" value="C:nucleus"/>
    <property type="evidence" value="ECO:0000318"/>
    <property type="project" value="GO_Central"/>
</dbReference>
<dbReference type="GO" id="GO:0000981">
    <property type="term" value="F:DNA-binding transcription factor activity, RNA polymerase II-specific"/>
    <property type="evidence" value="ECO:0000318"/>
    <property type="project" value="GO_Central"/>
</dbReference>
<dbReference type="GO" id="GO:0001227">
    <property type="term" value="F:DNA-binding transcription repressor activity, RNA polymerase II-specific"/>
    <property type="evidence" value="ECO:0000314"/>
    <property type="project" value="NTNU_SB"/>
</dbReference>
<dbReference type="GO" id="GO:0044323">
    <property type="term" value="F:retinoic acid-responsive element binding"/>
    <property type="evidence" value="ECO:0007669"/>
    <property type="project" value="Ensembl"/>
</dbReference>
<dbReference type="GO" id="GO:0000978">
    <property type="term" value="F:RNA polymerase II cis-regulatory region sequence-specific DNA binding"/>
    <property type="evidence" value="ECO:0000314"/>
    <property type="project" value="NTNU_SB"/>
</dbReference>
<dbReference type="GO" id="GO:0008270">
    <property type="term" value="F:zinc ion binding"/>
    <property type="evidence" value="ECO:0007669"/>
    <property type="project" value="UniProtKB-KW"/>
</dbReference>
<dbReference type="GO" id="GO:0045665">
    <property type="term" value="P:negative regulation of neuron differentiation"/>
    <property type="evidence" value="ECO:0007669"/>
    <property type="project" value="Ensembl"/>
</dbReference>
<dbReference type="GO" id="GO:0048387">
    <property type="term" value="P:negative regulation of retinoic acid receptor signaling pathway"/>
    <property type="evidence" value="ECO:0007669"/>
    <property type="project" value="Ensembl"/>
</dbReference>
<dbReference type="GO" id="GO:0000122">
    <property type="term" value="P:negative regulation of transcription by RNA polymerase II"/>
    <property type="evidence" value="ECO:0000314"/>
    <property type="project" value="NTNU_SB"/>
</dbReference>
<dbReference type="GO" id="GO:0006355">
    <property type="term" value="P:regulation of DNA-templated transcription"/>
    <property type="evidence" value="ECO:0000318"/>
    <property type="project" value="GO_Central"/>
</dbReference>
<dbReference type="FunFam" id="3.30.160.60:FF:000075">
    <property type="entry name" value="Putative zinc finger protein 536"/>
    <property type="match status" value="2"/>
</dbReference>
<dbReference type="FunFam" id="3.30.160.60:FF:000694">
    <property type="entry name" value="zinc finger protein 516"/>
    <property type="match status" value="1"/>
</dbReference>
<dbReference type="FunFam" id="3.30.160.60:FF:000591">
    <property type="entry name" value="Zinc finger protein 536"/>
    <property type="match status" value="1"/>
</dbReference>
<dbReference type="FunFam" id="3.30.160.60:FF:000615">
    <property type="entry name" value="Zinc finger protein 536"/>
    <property type="match status" value="1"/>
</dbReference>
<dbReference type="FunFam" id="3.30.160.60:FF:000625">
    <property type="entry name" value="Zinc finger protein 536"/>
    <property type="match status" value="1"/>
</dbReference>
<dbReference type="Gene3D" id="3.30.160.60">
    <property type="entry name" value="Classic Zinc Finger"/>
    <property type="match status" value="6"/>
</dbReference>
<dbReference type="InterPro" id="IPR051967">
    <property type="entry name" value="Krueppel_C2H2-ZF"/>
</dbReference>
<dbReference type="InterPro" id="IPR036236">
    <property type="entry name" value="Znf_C2H2_sf"/>
</dbReference>
<dbReference type="InterPro" id="IPR013087">
    <property type="entry name" value="Znf_C2H2_type"/>
</dbReference>
<dbReference type="PANTHER" id="PTHR45925">
    <property type="entry name" value="ZINC FINGER PROTEIN"/>
    <property type="match status" value="1"/>
</dbReference>
<dbReference type="PANTHER" id="PTHR45925:SF2">
    <property type="entry name" value="ZINC FINGER PROTEIN 536"/>
    <property type="match status" value="1"/>
</dbReference>
<dbReference type="Pfam" id="PF00096">
    <property type="entry name" value="zf-C2H2"/>
    <property type="match status" value="5"/>
</dbReference>
<dbReference type="Pfam" id="PF16606">
    <property type="entry name" value="zf-C2H2_assoc"/>
    <property type="match status" value="1"/>
</dbReference>
<dbReference type="Pfam" id="PF13909">
    <property type="entry name" value="zf-H2C2_5"/>
    <property type="match status" value="1"/>
</dbReference>
<dbReference type="SMART" id="SM00355">
    <property type="entry name" value="ZnF_C2H2"/>
    <property type="match status" value="10"/>
</dbReference>
<dbReference type="SUPFAM" id="SSF57667">
    <property type="entry name" value="beta-beta-alpha zinc fingers"/>
    <property type="match status" value="5"/>
</dbReference>
<dbReference type="PROSITE" id="PS00028">
    <property type="entry name" value="ZINC_FINGER_C2H2_1"/>
    <property type="match status" value="6"/>
</dbReference>
<dbReference type="PROSITE" id="PS50157">
    <property type="entry name" value="ZINC_FINGER_C2H2_2"/>
    <property type="match status" value="8"/>
</dbReference>
<organism>
    <name type="scientific">Homo sapiens</name>
    <name type="common">Human</name>
    <dbReference type="NCBI Taxonomy" id="9606"/>
    <lineage>
        <taxon>Eukaryota</taxon>
        <taxon>Metazoa</taxon>
        <taxon>Chordata</taxon>
        <taxon>Craniata</taxon>
        <taxon>Vertebrata</taxon>
        <taxon>Euteleostomi</taxon>
        <taxon>Mammalia</taxon>
        <taxon>Eutheria</taxon>
        <taxon>Euarchontoglires</taxon>
        <taxon>Primates</taxon>
        <taxon>Haplorrhini</taxon>
        <taxon>Catarrhini</taxon>
        <taxon>Hominidae</taxon>
        <taxon>Homo</taxon>
    </lineage>
</organism>
<sequence>MEEASLCLGVSSAEPEAEPHLSGPVLNGQYAMSQKLHQITSQLSHAFPELHPRPNPEEKPPASLEEKAHVPMSGQPMGSQMALLANQLGREVDTSLNGRVDLQQFLNGQNLGIMSQMSDIEDDARKNRKYPCPLCGKRFRFNSILSLHMRTHTGEKPFKCPYCDHRAAQKGNLKIHLRTHKLGNLGKGRGRVREENRLLHELEERAILRDKQLKGSLLQPRPDLKPPPHAQQAPLAACTLALQANHSVPDVAHPVPSPKPASVQEDAVAPAAGFRCTFCKGKFKKREELDRHIRILHKPYKCTLCDFAASQEEELISHVEKAHITAESAQGQGPNGGGEQSANEFRCEVCGQVFSQAWFLKGHMRKHKDSFEHCCQICGRRFKEPWFLKNHMKVHLNKLSVKNKSPSDPEVPVPMGGMSQEAHANLYSRYLSCLQSGFMTPDKAGLSEPSQLYGKGELPMKEKEALGKLLSPISSMAHGVPEGDKHSLLGCLNLVPPLKSSCIERLQAAAKAAEMDPVNSYQAWQLMARGMAMEHGFLSKEHPLQRNHEDTLANAGVLFDKEKREYVLVGADGSKQKMPADLVHSTKVGSQRDLPSKLDPLESSRDFLSHGLNQTLEYNLQGPGNMKEKPTECPDCGRVFRTYHQVVVHSRVHKRDRKGEEDGLHVGLDERRGSGSDQESQSVSRSTTPGSSNVTEESGVGGGLSQTGSAQEDSPHPSSPSSSDIGEEAGRSAGVQQPALLRDRSLGSAMKDCPYCGKTFRTSHHLKVHLRIHTGEKPYKCPHCDYAGTQSASLKYHLERHHRERQNGAGPLSGQPPNQDHKDEMSSKASLFIRPDILRGAFKGLPGIDFRGGPASQQWTSGVLSSGDHSGQATGMSSEVPSDALKGTDLPSKSTHFSEIGRAYQSIVSNGVNFQGSLQAFMDSFVLSSLKKEKDMKDKALADPPSMKVHGVDGGEEKPSGKSSQRKSEKSQYEPLDLSVRPDAASLPGSSVTVQDSIAWHGCLFCAFTTSSMELMALHLQANHLGKAKRKDNTIGVTVNCKDQAREASKMALLPSLQSNKDLGLSNMISSLDSASEKMAQGQLKETLGEQKSGAWTGHVDPAFCNFPSDFYKQFGVYPGMVGSGASSSCPNKEPDGKAHSEEDVPILIPETTSKNTTDDLSDIASSEDMDSSKGENNDEEDVETEPEMMTKPLSALSKDSSSDGGDSLQPTGTSQPVQGLVSPLSQAPEKQWHSQGLLQAQDPLAGLPKPERGPQSLDKPMNMLSVLRAYSSDGLAAFNGLASSTANSGCIKRPDLCGK</sequence>
<proteinExistence type="evidence at protein level"/>
<feature type="chain" id="PRO_0000271041" description="Zinc finger protein 536">
    <location>
        <begin position="1"/>
        <end position="1300"/>
    </location>
</feature>
<feature type="zinc finger region" description="C2H2-type 1" evidence="1">
    <location>
        <begin position="130"/>
        <end position="152"/>
    </location>
</feature>
<feature type="zinc finger region" description="C2H2-type 2" evidence="1">
    <location>
        <begin position="158"/>
        <end position="180"/>
    </location>
</feature>
<feature type="zinc finger region" description="C2H2-type 3" evidence="1">
    <location>
        <begin position="274"/>
        <end position="297"/>
    </location>
</feature>
<feature type="zinc finger region" description="C2H2-type 4" evidence="1">
    <location>
        <begin position="300"/>
        <end position="323"/>
    </location>
</feature>
<feature type="zinc finger region" description="C2H2-type 5" evidence="1">
    <location>
        <begin position="345"/>
        <end position="367"/>
    </location>
</feature>
<feature type="zinc finger region" description="C2H2-type 6" evidence="1">
    <location>
        <begin position="373"/>
        <end position="395"/>
    </location>
</feature>
<feature type="zinc finger region" description="C2H2-type 7" evidence="1">
    <location>
        <begin position="631"/>
        <end position="653"/>
    </location>
</feature>
<feature type="zinc finger region" description="C2H2-type 8" evidence="1">
    <location>
        <begin position="751"/>
        <end position="773"/>
    </location>
</feature>
<feature type="zinc finger region" description="C2H2-type 9" evidence="1">
    <location>
        <begin position="779"/>
        <end position="801"/>
    </location>
</feature>
<feature type="region of interest" description="Disordered" evidence="2">
    <location>
        <begin position="1"/>
        <end position="26"/>
    </location>
</feature>
<feature type="region of interest" description="Disordered" evidence="2">
    <location>
        <begin position="47"/>
        <end position="77"/>
    </location>
</feature>
<feature type="region of interest" description="Disordered" evidence="2">
    <location>
        <begin position="584"/>
        <end position="604"/>
    </location>
</feature>
<feature type="region of interest" description="Disordered" evidence="2">
    <location>
        <begin position="650"/>
        <end position="739"/>
    </location>
</feature>
<feature type="region of interest" description="Disordered" evidence="2">
    <location>
        <begin position="802"/>
        <end position="826"/>
    </location>
</feature>
<feature type="region of interest" description="Disordered" evidence="2">
    <location>
        <begin position="856"/>
        <end position="893"/>
    </location>
</feature>
<feature type="region of interest" description="Disordered" evidence="2">
    <location>
        <begin position="937"/>
        <end position="985"/>
    </location>
</feature>
<feature type="region of interest" description="Disordered" evidence="2">
    <location>
        <begin position="1124"/>
        <end position="1260"/>
    </location>
</feature>
<feature type="compositionally biased region" description="Basic and acidic residues" evidence="2">
    <location>
        <begin position="48"/>
        <end position="69"/>
    </location>
</feature>
<feature type="compositionally biased region" description="Basic and acidic residues" evidence="2">
    <location>
        <begin position="594"/>
        <end position="604"/>
    </location>
</feature>
<feature type="compositionally biased region" description="Basic and acidic residues" evidence="2">
    <location>
        <begin position="657"/>
        <end position="674"/>
    </location>
</feature>
<feature type="compositionally biased region" description="Polar residues" evidence="2">
    <location>
        <begin position="675"/>
        <end position="696"/>
    </location>
</feature>
<feature type="compositionally biased region" description="Polar residues" evidence="2">
    <location>
        <begin position="856"/>
        <end position="880"/>
    </location>
</feature>
<feature type="compositionally biased region" description="Basic and acidic residues" evidence="2">
    <location>
        <begin position="950"/>
        <end position="972"/>
    </location>
</feature>
<feature type="compositionally biased region" description="Basic and acidic residues" evidence="2">
    <location>
        <begin position="1133"/>
        <end position="1143"/>
    </location>
</feature>
<feature type="compositionally biased region" description="Acidic residues" evidence="2">
    <location>
        <begin position="1160"/>
        <end position="1170"/>
    </location>
</feature>
<feature type="compositionally biased region" description="Acidic residues" evidence="2">
    <location>
        <begin position="1178"/>
        <end position="1187"/>
    </location>
</feature>
<feature type="compositionally biased region" description="Low complexity" evidence="2">
    <location>
        <begin position="1194"/>
        <end position="1209"/>
    </location>
</feature>
<feature type="modified residue" description="Phosphoserine" evidence="6">
    <location>
        <position position="826"/>
    </location>
</feature>
<feature type="modified residue" description="Phosphoserine" evidence="6">
    <location>
        <position position="827"/>
    </location>
</feature>
<comment type="function">
    <text evidence="3 4">Transcriptional repressor that negatively regulates neuron differentiation by repressing retinoic acid-induced gene transcription (PubMed:19398580). Binds and interrupts RARA from binding to retinoic acid response elements (RARE) composed of tandem 5'-AGGTCA-3' sites known as DR1-DR5 (PubMed:19398580). Recognizes and binds 2 copies of the core DNA sequence 5'-CCCCCA-3' (PubMed:14621294).</text>
</comment>
<comment type="subcellular location">
    <subcellularLocation>
        <location evidence="4">Nucleus</location>
    </subcellularLocation>
</comment>
<comment type="similarity">
    <text evidence="5">Belongs to the krueppel C2H2-type zinc-finger protein family.</text>
</comment>
<comment type="sequence caution" evidence="5">
    <conflict type="erroneous initiation">
        <sequence resource="EMBL-CDS" id="BAA20844"/>
    </conflict>
    <text>Extended N-terminus.</text>
</comment>
<accession>O15090</accession>
<accession>A2RU18</accession>
<keyword id="KW-0238">DNA-binding</keyword>
<keyword id="KW-0479">Metal-binding</keyword>
<keyword id="KW-0539">Nucleus</keyword>
<keyword id="KW-0597">Phosphoprotein</keyword>
<keyword id="KW-1267">Proteomics identification</keyword>
<keyword id="KW-1185">Reference proteome</keyword>
<keyword id="KW-0677">Repeat</keyword>
<keyword id="KW-0804">Transcription</keyword>
<keyword id="KW-0805">Transcription regulation</keyword>
<keyword id="KW-0862">Zinc</keyword>
<keyword id="KW-0863">Zinc-finger</keyword>